<gene>
    <name evidence="1" type="primary">mhpF</name>
    <name type="ordered locus">EcSMS35_0382</name>
</gene>
<name>ACDH_ECOSM</name>
<keyword id="KW-0058">Aromatic hydrocarbons catabolism</keyword>
<keyword id="KW-0520">NAD</keyword>
<keyword id="KW-0560">Oxidoreductase</keyword>
<dbReference type="EC" id="1.2.1.10" evidence="1"/>
<dbReference type="EMBL" id="CP000970">
    <property type="protein sequence ID" value="ACB18379.1"/>
    <property type="molecule type" value="Genomic_DNA"/>
</dbReference>
<dbReference type="RefSeq" id="WP_000044314.1">
    <property type="nucleotide sequence ID" value="NC_010498.1"/>
</dbReference>
<dbReference type="SMR" id="B1LIN6"/>
<dbReference type="GeneID" id="93777104"/>
<dbReference type="KEGG" id="ecm:EcSMS35_0382"/>
<dbReference type="HOGENOM" id="CLU_062208_0_0_6"/>
<dbReference type="UniPathway" id="UPA00714"/>
<dbReference type="Proteomes" id="UP000007011">
    <property type="component" value="Chromosome"/>
</dbReference>
<dbReference type="GO" id="GO:0008774">
    <property type="term" value="F:acetaldehyde dehydrogenase (acetylating) activity"/>
    <property type="evidence" value="ECO:0007669"/>
    <property type="project" value="UniProtKB-UniRule"/>
</dbReference>
<dbReference type="GO" id="GO:0051287">
    <property type="term" value="F:NAD binding"/>
    <property type="evidence" value="ECO:0007669"/>
    <property type="project" value="UniProtKB-UniRule"/>
</dbReference>
<dbReference type="GO" id="GO:0019380">
    <property type="term" value="P:3-phenylpropionate catabolic process"/>
    <property type="evidence" value="ECO:0007669"/>
    <property type="project" value="UniProtKB-UniRule"/>
</dbReference>
<dbReference type="CDD" id="cd23933">
    <property type="entry name" value="ALDH_C"/>
    <property type="match status" value="1"/>
</dbReference>
<dbReference type="FunFam" id="3.30.360.10:FF:000021">
    <property type="entry name" value="Acetaldehyde dehydrogenase"/>
    <property type="match status" value="1"/>
</dbReference>
<dbReference type="Gene3D" id="3.30.360.10">
    <property type="entry name" value="Dihydrodipicolinate Reductase, domain 2"/>
    <property type="match status" value="1"/>
</dbReference>
<dbReference type="Gene3D" id="3.40.50.720">
    <property type="entry name" value="NAD(P)-binding Rossmann-like Domain"/>
    <property type="match status" value="1"/>
</dbReference>
<dbReference type="HAMAP" id="MF_01657">
    <property type="entry name" value="Ac_ald_DH_ac"/>
    <property type="match status" value="1"/>
</dbReference>
<dbReference type="InterPro" id="IPR003361">
    <property type="entry name" value="Acetaldehyde_dehydrogenase"/>
</dbReference>
<dbReference type="InterPro" id="IPR015426">
    <property type="entry name" value="Acetylaldehyde_DH_C"/>
</dbReference>
<dbReference type="InterPro" id="IPR036291">
    <property type="entry name" value="NAD(P)-bd_dom_sf"/>
</dbReference>
<dbReference type="InterPro" id="IPR000534">
    <property type="entry name" value="Semialdehyde_DH_NAD-bd"/>
</dbReference>
<dbReference type="NCBIfam" id="TIGR03215">
    <property type="entry name" value="ac_ald_DH_ac"/>
    <property type="match status" value="1"/>
</dbReference>
<dbReference type="NCBIfam" id="NF006157">
    <property type="entry name" value="PRK08300.1"/>
    <property type="match status" value="1"/>
</dbReference>
<dbReference type="Pfam" id="PF09290">
    <property type="entry name" value="AcetDehyd-dimer"/>
    <property type="match status" value="1"/>
</dbReference>
<dbReference type="Pfam" id="PF01118">
    <property type="entry name" value="Semialdhyde_dh"/>
    <property type="match status" value="1"/>
</dbReference>
<dbReference type="PIRSF" id="PIRSF015689">
    <property type="entry name" value="Actaldh_dh_actl"/>
    <property type="match status" value="1"/>
</dbReference>
<dbReference type="SMART" id="SM00859">
    <property type="entry name" value="Semialdhyde_dh"/>
    <property type="match status" value="1"/>
</dbReference>
<dbReference type="SUPFAM" id="SSF55347">
    <property type="entry name" value="Glyceraldehyde-3-phosphate dehydrogenase-like, C-terminal domain"/>
    <property type="match status" value="1"/>
</dbReference>
<dbReference type="SUPFAM" id="SSF51735">
    <property type="entry name" value="NAD(P)-binding Rossmann-fold domains"/>
    <property type="match status" value="1"/>
</dbReference>
<evidence type="ECO:0000255" key="1">
    <source>
        <dbReference type="HAMAP-Rule" id="MF_01657"/>
    </source>
</evidence>
<accession>B1LIN6</accession>
<proteinExistence type="inferred from homology"/>
<feature type="chain" id="PRO_1000187036" description="Acetaldehyde dehydrogenase">
    <location>
        <begin position="1"/>
        <end position="316"/>
    </location>
</feature>
<feature type="active site" description="Acyl-thioester intermediate" evidence="1">
    <location>
        <position position="131"/>
    </location>
</feature>
<feature type="binding site" evidence="1">
    <location>
        <begin position="11"/>
        <end position="14"/>
    </location>
    <ligand>
        <name>NAD(+)</name>
        <dbReference type="ChEBI" id="CHEBI:57540"/>
    </ligand>
</feature>
<feature type="binding site" evidence="1">
    <location>
        <begin position="162"/>
        <end position="170"/>
    </location>
    <ligand>
        <name>NAD(+)</name>
        <dbReference type="ChEBI" id="CHEBI:57540"/>
    </ligand>
</feature>
<feature type="binding site" evidence="1">
    <location>
        <position position="289"/>
    </location>
    <ligand>
        <name>NAD(+)</name>
        <dbReference type="ChEBI" id="CHEBI:57540"/>
    </ligand>
</feature>
<protein>
    <recommendedName>
        <fullName evidence="1">Acetaldehyde dehydrogenase</fullName>
        <ecNumber evidence="1">1.2.1.10</ecNumber>
    </recommendedName>
    <alternativeName>
        <fullName evidence="1">Acetaldehyde dehydrogenase [acetylating]</fullName>
    </alternativeName>
</protein>
<sequence length="316" mass="33442">MSKRKVAIIGSGNIGTDLMIKILRHGQHLEMAVMVGIDPQSDGLARARRMGVATTHEGVIGLMNMPEFADIDIVFDATSAGAHVKNDAALREAKPDIRLIDLTPAAIGPYCVPVVNLEANVDQLNVNMVTCGGQATIPMVAAVSRVARVHYAEIIASIASKSAGPGTRANIDEFTETTSRAIEVVGGAAKGKAIIVLNPAEPPLMMRDTVYVLSDEASQDDIEASINEMAEAVQAYVPGYRLKQRVQFEVIPQDKPVNLPGVGQFSGLKTAVWLEVEGAAHYLPAYAGNLDIMTSSALATAEKMAQSLARKAGEAA</sequence>
<organism>
    <name type="scientific">Escherichia coli (strain SMS-3-5 / SECEC)</name>
    <dbReference type="NCBI Taxonomy" id="439855"/>
    <lineage>
        <taxon>Bacteria</taxon>
        <taxon>Pseudomonadati</taxon>
        <taxon>Pseudomonadota</taxon>
        <taxon>Gammaproteobacteria</taxon>
        <taxon>Enterobacterales</taxon>
        <taxon>Enterobacteriaceae</taxon>
        <taxon>Escherichia</taxon>
    </lineage>
</organism>
<comment type="function">
    <text evidence="1">Catalyzes the conversion of acetaldehyde to acetyl-CoA, using NAD(+) and coenzyme A. Is the final enzyme in the meta-cleavage pathway for the degradation of aromatic compounds.</text>
</comment>
<comment type="catalytic activity">
    <reaction evidence="1">
        <text>acetaldehyde + NAD(+) + CoA = acetyl-CoA + NADH + H(+)</text>
        <dbReference type="Rhea" id="RHEA:23288"/>
        <dbReference type="ChEBI" id="CHEBI:15343"/>
        <dbReference type="ChEBI" id="CHEBI:15378"/>
        <dbReference type="ChEBI" id="CHEBI:57287"/>
        <dbReference type="ChEBI" id="CHEBI:57288"/>
        <dbReference type="ChEBI" id="CHEBI:57540"/>
        <dbReference type="ChEBI" id="CHEBI:57945"/>
        <dbReference type="EC" id="1.2.1.10"/>
    </reaction>
</comment>
<comment type="pathway">
    <text evidence="1">Aromatic compound metabolism; 3-phenylpropanoate degradation.</text>
</comment>
<comment type="subunit">
    <text evidence="1">Interacts with MhpE.</text>
</comment>
<comment type="similarity">
    <text evidence="1">Belongs to the acetaldehyde dehydrogenase family.</text>
</comment>
<reference key="1">
    <citation type="journal article" date="2008" name="J. Bacteriol.">
        <title>Insights into the environmental resistance gene pool from the genome sequence of the multidrug-resistant environmental isolate Escherichia coli SMS-3-5.</title>
        <authorList>
            <person name="Fricke W.F."/>
            <person name="Wright M.S."/>
            <person name="Lindell A.H."/>
            <person name="Harkins D.M."/>
            <person name="Baker-Austin C."/>
            <person name="Ravel J."/>
            <person name="Stepanauskas R."/>
        </authorList>
    </citation>
    <scope>NUCLEOTIDE SEQUENCE [LARGE SCALE GENOMIC DNA]</scope>
    <source>
        <strain>SMS-3-5 / SECEC</strain>
    </source>
</reference>